<protein>
    <recommendedName>
        <fullName evidence="1">Large ribosomal subunit protein bL31</fullName>
    </recommendedName>
    <alternativeName>
        <fullName evidence="2">50S ribosomal protein L31</fullName>
    </alternativeName>
</protein>
<sequence>MKPGIHPEYAEITANCTCGNVIKVNSTVGKDLHLDVCGACHPFYTGTQKVVDTGGRIDKFNKRFGMLGKK</sequence>
<evidence type="ECO:0000255" key="1">
    <source>
        <dbReference type="HAMAP-Rule" id="MF_00501"/>
    </source>
</evidence>
<evidence type="ECO:0000305" key="2"/>
<proteinExistence type="inferred from homology"/>
<dbReference type="EMBL" id="AE014299">
    <property type="protein sequence ID" value="AAN57093.1"/>
    <property type="molecule type" value="Genomic_DNA"/>
</dbReference>
<dbReference type="RefSeq" id="NP_719649.1">
    <property type="nucleotide sequence ID" value="NC_004347.2"/>
</dbReference>
<dbReference type="RefSeq" id="WP_011073821.1">
    <property type="nucleotide sequence ID" value="NZ_CP053946.1"/>
</dbReference>
<dbReference type="SMR" id="Q8E9Z0"/>
<dbReference type="STRING" id="211586.SO_4120"/>
<dbReference type="PaxDb" id="211586-SO_4120"/>
<dbReference type="KEGG" id="son:SO_4120"/>
<dbReference type="PATRIC" id="fig|211586.12.peg.3985"/>
<dbReference type="eggNOG" id="COG0254">
    <property type="taxonomic scope" value="Bacteria"/>
</dbReference>
<dbReference type="HOGENOM" id="CLU_114306_4_3_6"/>
<dbReference type="OrthoDB" id="9803251at2"/>
<dbReference type="PhylomeDB" id="Q8E9Z0"/>
<dbReference type="BioCyc" id="SONE211586:G1GMP-3806-MONOMER"/>
<dbReference type="Proteomes" id="UP000008186">
    <property type="component" value="Chromosome"/>
</dbReference>
<dbReference type="GO" id="GO:1990904">
    <property type="term" value="C:ribonucleoprotein complex"/>
    <property type="evidence" value="ECO:0007669"/>
    <property type="project" value="UniProtKB-KW"/>
</dbReference>
<dbReference type="GO" id="GO:0005840">
    <property type="term" value="C:ribosome"/>
    <property type="evidence" value="ECO:0007669"/>
    <property type="project" value="UniProtKB-KW"/>
</dbReference>
<dbReference type="GO" id="GO:0046872">
    <property type="term" value="F:metal ion binding"/>
    <property type="evidence" value="ECO:0007669"/>
    <property type="project" value="UniProtKB-KW"/>
</dbReference>
<dbReference type="GO" id="GO:0019843">
    <property type="term" value="F:rRNA binding"/>
    <property type="evidence" value="ECO:0007669"/>
    <property type="project" value="UniProtKB-KW"/>
</dbReference>
<dbReference type="GO" id="GO:0003735">
    <property type="term" value="F:structural constituent of ribosome"/>
    <property type="evidence" value="ECO:0007669"/>
    <property type="project" value="InterPro"/>
</dbReference>
<dbReference type="GO" id="GO:0006412">
    <property type="term" value="P:translation"/>
    <property type="evidence" value="ECO:0007669"/>
    <property type="project" value="UniProtKB-UniRule"/>
</dbReference>
<dbReference type="Gene3D" id="4.10.830.30">
    <property type="entry name" value="Ribosomal protein L31"/>
    <property type="match status" value="1"/>
</dbReference>
<dbReference type="HAMAP" id="MF_00501">
    <property type="entry name" value="Ribosomal_bL31_1"/>
    <property type="match status" value="1"/>
</dbReference>
<dbReference type="InterPro" id="IPR034704">
    <property type="entry name" value="Ribosomal_bL28/bL31-like_sf"/>
</dbReference>
<dbReference type="InterPro" id="IPR002150">
    <property type="entry name" value="Ribosomal_bL31"/>
</dbReference>
<dbReference type="InterPro" id="IPR027491">
    <property type="entry name" value="Ribosomal_bL31_A"/>
</dbReference>
<dbReference type="InterPro" id="IPR042105">
    <property type="entry name" value="Ribosomal_bL31_sf"/>
</dbReference>
<dbReference type="NCBIfam" id="TIGR00105">
    <property type="entry name" value="L31"/>
    <property type="match status" value="1"/>
</dbReference>
<dbReference type="NCBIfam" id="NF000612">
    <property type="entry name" value="PRK00019.1"/>
    <property type="match status" value="1"/>
</dbReference>
<dbReference type="NCBIfam" id="NF001809">
    <property type="entry name" value="PRK00528.1"/>
    <property type="match status" value="1"/>
</dbReference>
<dbReference type="PANTHER" id="PTHR33280">
    <property type="entry name" value="50S RIBOSOMAL PROTEIN L31, CHLOROPLASTIC"/>
    <property type="match status" value="1"/>
</dbReference>
<dbReference type="PANTHER" id="PTHR33280:SF6">
    <property type="entry name" value="LARGE RIBOSOMAL SUBUNIT PROTEIN BL31A"/>
    <property type="match status" value="1"/>
</dbReference>
<dbReference type="Pfam" id="PF01197">
    <property type="entry name" value="Ribosomal_L31"/>
    <property type="match status" value="1"/>
</dbReference>
<dbReference type="PRINTS" id="PR01249">
    <property type="entry name" value="RIBOSOMALL31"/>
</dbReference>
<dbReference type="SUPFAM" id="SSF143800">
    <property type="entry name" value="L28p-like"/>
    <property type="match status" value="1"/>
</dbReference>
<dbReference type="PROSITE" id="PS01143">
    <property type="entry name" value="RIBOSOMAL_L31"/>
    <property type="match status" value="1"/>
</dbReference>
<feature type="chain" id="PRO_0000173160" description="Large ribosomal subunit protein bL31">
    <location>
        <begin position="1"/>
        <end position="70"/>
    </location>
</feature>
<feature type="binding site" evidence="1">
    <location>
        <position position="16"/>
    </location>
    <ligand>
        <name>Zn(2+)</name>
        <dbReference type="ChEBI" id="CHEBI:29105"/>
    </ligand>
</feature>
<feature type="binding site" evidence="1">
    <location>
        <position position="18"/>
    </location>
    <ligand>
        <name>Zn(2+)</name>
        <dbReference type="ChEBI" id="CHEBI:29105"/>
    </ligand>
</feature>
<feature type="binding site" evidence="1">
    <location>
        <position position="37"/>
    </location>
    <ligand>
        <name>Zn(2+)</name>
        <dbReference type="ChEBI" id="CHEBI:29105"/>
    </ligand>
</feature>
<feature type="binding site" evidence="1">
    <location>
        <position position="40"/>
    </location>
    <ligand>
        <name>Zn(2+)</name>
        <dbReference type="ChEBI" id="CHEBI:29105"/>
    </ligand>
</feature>
<name>RL31_SHEON</name>
<accession>Q8E9Z0</accession>
<comment type="function">
    <text evidence="1">Binds the 23S rRNA.</text>
</comment>
<comment type="cofactor">
    <cofactor evidence="1">
        <name>Zn(2+)</name>
        <dbReference type="ChEBI" id="CHEBI:29105"/>
    </cofactor>
    <text evidence="1">Binds 1 zinc ion per subunit.</text>
</comment>
<comment type="subunit">
    <text evidence="1">Part of the 50S ribosomal subunit.</text>
</comment>
<comment type="similarity">
    <text evidence="1">Belongs to the bacterial ribosomal protein bL31 family. Type A subfamily.</text>
</comment>
<reference key="1">
    <citation type="journal article" date="2002" name="Nat. Biotechnol.">
        <title>Genome sequence of the dissimilatory metal ion-reducing bacterium Shewanella oneidensis.</title>
        <authorList>
            <person name="Heidelberg J.F."/>
            <person name="Paulsen I.T."/>
            <person name="Nelson K.E."/>
            <person name="Gaidos E.J."/>
            <person name="Nelson W.C."/>
            <person name="Read T.D."/>
            <person name="Eisen J.A."/>
            <person name="Seshadri R."/>
            <person name="Ward N.L."/>
            <person name="Methe B.A."/>
            <person name="Clayton R.A."/>
            <person name="Meyer T."/>
            <person name="Tsapin A."/>
            <person name="Scott J."/>
            <person name="Beanan M.J."/>
            <person name="Brinkac L.M."/>
            <person name="Daugherty S.C."/>
            <person name="DeBoy R.T."/>
            <person name="Dodson R.J."/>
            <person name="Durkin A.S."/>
            <person name="Haft D.H."/>
            <person name="Kolonay J.F."/>
            <person name="Madupu R."/>
            <person name="Peterson J.D."/>
            <person name="Umayam L.A."/>
            <person name="White O."/>
            <person name="Wolf A.M."/>
            <person name="Vamathevan J.J."/>
            <person name="Weidman J.F."/>
            <person name="Impraim M."/>
            <person name="Lee K."/>
            <person name="Berry K.J."/>
            <person name="Lee C."/>
            <person name="Mueller J."/>
            <person name="Khouri H.M."/>
            <person name="Gill J."/>
            <person name="Utterback T.R."/>
            <person name="McDonald L.A."/>
            <person name="Feldblyum T.V."/>
            <person name="Smith H.O."/>
            <person name="Venter J.C."/>
            <person name="Nealson K.H."/>
            <person name="Fraser C.M."/>
        </authorList>
    </citation>
    <scope>NUCLEOTIDE SEQUENCE [LARGE SCALE GENOMIC DNA]</scope>
    <source>
        <strain>ATCC 700550 / JCM 31522 / CIP 106686 / LMG 19005 / NCIMB 14063 / MR-1</strain>
    </source>
</reference>
<gene>
    <name evidence="1" type="primary">rpmE</name>
    <name type="ordered locus">SO_4120</name>
</gene>
<keyword id="KW-0479">Metal-binding</keyword>
<keyword id="KW-1185">Reference proteome</keyword>
<keyword id="KW-0687">Ribonucleoprotein</keyword>
<keyword id="KW-0689">Ribosomal protein</keyword>
<keyword id="KW-0694">RNA-binding</keyword>
<keyword id="KW-0699">rRNA-binding</keyword>
<keyword id="KW-0862">Zinc</keyword>
<organism>
    <name type="scientific">Shewanella oneidensis (strain ATCC 700550 / JCM 31522 / CIP 106686 / LMG 19005 / NCIMB 14063 / MR-1)</name>
    <dbReference type="NCBI Taxonomy" id="211586"/>
    <lineage>
        <taxon>Bacteria</taxon>
        <taxon>Pseudomonadati</taxon>
        <taxon>Pseudomonadota</taxon>
        <taxon>Gammaproteobacteria</taxon>
        <taxon>Alteromonadales</taxon>
        <taxon>Shewanellaceae</taxon>
        <taxon>Shewanella</taxon>
    </lineage>
</organism>